<name>GLYA_PYRCJ</name>
<dbReference type="EC" id="2.1.2.-" evidence="1"/>
<dbReference type="EMBL" id="CP000561">
    <property type="protein sequence ID" value="ABO07454.1"/>
    <property type="molecule type" value="Genomic_DNA"/>
</dbReference>
<dbReference type="RefSeq" id="WP_011848711.1">
    <property type="nucleotide sequence ID" value="NC_009073.1"/>
</dbReference>
<dbReference type="SMR" id="A3MS37"/>
<dbReference type="STRING" id="410359.Pcal_0014"/>
<dbReference type="GeneID" id="4909090"/>
<dbReference type="KEGG" id="pcl:Pcal_0014"/>
<dbReference type="eggNOG" id="arCOG00070">
    <property type="taxonomic scope" value="Archaea"/>
</dbReference>
<dbReference type="HOGENOM" id="CLU_022477_2_1_2"/>
<dbReference type="OrthoDB" id="5821at2157"/>
<dbReference type="UniPathway" id="UPA00288">
    <property type="reaction ID" value="UER01023"/>
</dbReference>
<dbReference type="Proteomes" id="UP000001431">
    <property type="component" value="Chromosome"/>
</dbReference>
<dbReference type="GO" id="GO:0005737">
    <property type="term" value="C:cytoplasm"/>
    <property type="evidence" value="ECO:0007669"/>
    <property type="project" value="UniProtKB-SubCell"/>
</dbReference>
<dbReference type="GO" id="GO:0004372">
    <property type="term" value="F:glycine hydroxymethyltransferase activity"/>
    <property type="evidence" value="ECO:0007669"/>
    <property type="project" value="UniProtKB-UniRule"/>
</dbReference>
<dbReference type="GO" id="GO:0030170">
    <property type="term" value="F:pyridoxal phosphate binding"/>
    <property type="evidence" value="ECO:0007669"/>
    <property type="project" value="UniProtKB-UniRule"/>
</dbReference>
<dbReference type="GO" id="GO:0019264">
    <property type="term" value="P:glycine biosynthetic process from serine"/>
    <property type="evidence" value="ECO:0007669"/>
    <property type="project" value="UniProtKB-UniRule"/>
</dbReference>
<dbReference type="GO" id="GO:0035999">
    <property type="term" value="P:tetrahydrofolate interconversion"/>
    <property type="evidence" value="ECO:0007669"/>
    <property type="project" value="InterPro"/>
</dbReference>
<dbReference type="CDD" id="cd00378">
    <property type="entry name" value="SHMT"/>
    <property type="match status" value="1"/>
</dbReference>
<dbReference type="FunFam" id="3.40.640.10:FF:000101">
    <property type="entry name" value="Serine hydroxymethyltransferase"/>
    <property type="match status" value="1"/>
</dbReference>
<dbReference type="FunFam" id="3.90.1150.10:FF:000114">
    <property type="entry name" value="Serine hydroxymethyltransferase"/>
    <property type="match status" value="1"/>
</dbReference>
<dbReference type="Gene3D" id="3.90.1150.10">
    <property type="entry name" value="Aspartate Aminotransferase, domain 1"/>
    <property type="match status" value="1"/>
</dbReference>
<dbReference type="Gene3D" id="3.40.640.10">
    <property type="entry name" value="Type I PLP-dependent aspartate aminotransferase-like (Major domain)"/>
    <property type="match status" value="1"/>
</dbReference>
<dbReference type="HAMAP" id="MF_00051">
    <property type="entry name" value="SHMT"/>
    <property type="match status" value="1"/>
</dbReference>
<dbReference type="InterPro" id="IPR015424">
    <property type="entry name" value="PyrdxlP-dep_Trfase"/>
</dbReference>
<dbReference type="InterPro" id="IPR015421">
    <property type="entry name" value="PyrdxlP-dep_Trfase_major"/>
</dbReference>
<dbReference type="InterPro" id="IPR015422">
    <property type="entry name" value="PyrdxlP-dep_Trfase_small"/>
</dbReference>
<dbReference type="InterPro" id="IPR001085">
    <property type="entry name" value="Ser_HO-MeTrfase"/>
</dbReference>
<dbReference type="InterPro" id="IPR049943">
    <property type="entry name" value="Ser_HO-MeTrfase-like"/>
</dbReference>
<dbReference type="InterPro" id="IPR019798">
    <property type="entry name" value="Ser_HO-MeTrfase_PLP_BS"/>
</dbReference>
<dbReference type="InterPro" id="IPR039429">
    <property type="entry name" value="SHMT-like_dom"/>
</dbReference>
<dbReference type="NCBIfam" id="NF000586">
    <property type="entry name" value="PRK00011.1"/>
    <property type="match status" value="1"/>
</dbReference>
<dbReference type="PANTHER" id="PTHR11680">
    <property type="entry name" value="SERINE HYDROXYMETHYLTRANSFERASE"/>
    <property type="match status" value="1"/>
</dbReference>
<dbReference type="PANTHER" id="PTHR11680:SF35">
    <property type="entry name" value="SERINE HYDROXYMETHYLTRANSFERASE 1"/>
    <property type="match status" value="1"/>
</dbReference>
<dbReference type="Pfam" id="PF00464">
    <property type="entry name" value="SHMT"/>
    <property type="match status" value="1"/>
</dbReference>
<dbReference type="PIRSF" id="PIRSF000412">
    <property type="entry name" value="SHMT"/>
    <property type="match status" value="1"/>
</dbReference>
<dbReference type="SUPFAM" id="SSF53383">
    <property type="entry name" value="PLP-dependent transferases"/>
    <property type="match status" value="1"/>
</dbReference>
<dbReference type="PROSITE" id="PS00096">
    <property type="entry name" value="SHMT"/>
    <property type="match status" value="1"/>
</dbReference>
<comment type="function">
    <text evidence="1">Catalyzes the reversible interconversion of serine and glycine with a modified folate serving as the one-carbon carrier. Also exhibits a pteridine-independent aldolase activity toward beta-hydroxyamino acids, producing glycine and aldehydes, via a retro-aldol mechanism.</text>
</comment>
<comment type="cofactor">
    <cofactor evidence="1">
        <name>pyridoxal 5'-phosphate</name>
        <dbReference type="ChEBI" id="CHEBI:597326"/>
    </cofactor>
</comment>
<comment type="pathway">
    <text evidence="1">Amino-acid biosynthesis; glycine biosynthesis; glycine from L-serine: step 1/1.</text>
</comment>
<comment type="subunit">
    <text evidence="1">Homodimer.</text>
</comment>
<comment type="subcellular location">
    <subcellularLocation>
        <location evidence="1">Cytoplasm</location>
    </subcellularLocation>
</comment>
<comment type="similarity">
    <text evidence="1">Belongs to the SHMT family.</text>
</comment>
<feature type="chain" id="PRO_0000369974" description="Serine hydroxymethyltransferase">
    <location>
        <begin position="1"/>
        <end position="430"/>
    </location>
</feature>
<feature type="binding site" evidence="1">
    <location>
        <begin position="120"/>
        <end position="122"/>
    </location>
    <ligand>
        <name>(6S)-5,6,7,8-tetrahydrofolate</name>
        <dbReference type="ChEBI" id="CHEBI:57453"/>
    </ligand>
</feature>
<feature type="site" description="Plays an important role in substrate specificity" evidence="1">
    <location>
        <position position="225"/>
    </location>
</feature>
<feature type="modified residue" description="N6-(pyridoxal phosphate)lysine" evidence="1">
    <location>
        <position position="226"/>
    </location>
</feature>
<reference key="1">
    <citation type="submission" date="2007-02" db="EMBL/GenBank/DDBJ databases">
        <title>Complete sequence of Pyrobaculum calidifontis JCM 11548.</title>
        <authorList>
            <consortium name="US DOE Joint Genome Institute"/>
            <person name="Copeland A."/>
            <person name="Lucas S."/>
            <person name="Lapidus A."/>
            <person name="Barry K."/>
            <person name="Glavina del Rio T."/>
            <person name="Dalin E."/>
            <person name="Tice H."/>
            <person name="Pitluck S."/>
            <person name="Chain P."/>
            <person name="Malfatti S."/>
            <person name="Shin M."/>
            <person name="Vergez L."/>
            <person name="Schmutz J."/>
            <person name="Larimer F."/>
            <person name="Land M."/>
            <person name="Hauser L."/>
            <person name="Kyrpides N."/>
            <person name="Mikhailova N."/>
            <person name="Cozen A.E."/>
            <person name="Fitz-Gibbon S.T."/>
            <person name="House C.H."/>
            <person name="Saltikov C."/>
            <person name="Lowe T.M."/>
            <person name="Richardson P."/>
        </authorList>
    </citation>
    <scope>NUCLEOTIDE SEQUENCE [LARGE SCALE GENOMIC DNA]</scope>
    <source>
        <strain>DSM 21063 / JCM 11548 / VA1</strain>
    </source>
</reference>
<keyword id="KW-0028">Amino-acid biosynthesis</keyword>
<keyword id="KW-0963">Cytoplasm</keyword>
<keyword id="KW-0554">One-carbon metabolism</keyword>
<keyword id="KW-0663">Pyridoxal phosphate</keyword>
<keyword id="KW-0808">Transferase</keyword>
<gene>
    <name evidence="1" type="primary">glyA</name>
    <name type="ordered locus">Pcal_0014</name>
</gene>
<evidence type="ECO:0000255" key="1">
    <source>
        <dbReference type="HAMAP-Rule" id="MF_00051"/>
    </source>
</evidence>
<accession>A3MS37</accession>
<proteinExistence type="inferred from homology"/>
<protein>
    <recommendedName>
        <fullName evidence="1">Serine hydroxymethyltransferase</fullName>
        <shortName evidence="1">SHMT</shortName>
        <shortName evidence="1">Serine methylase</shortName>
        <ecNumber evidence="1">2.1.2.-</ecNumber>
    </recommendedName>
</protein>
<organism>
    <name type="scientific">Pyrobaculum calidifontis (strain DSM 21063 / JCM 11548 / VA1)</name>
    <dbReference type="NCBI Taxonomy" id="410359"/>
    <lineage>
        <taxon>Archaea</taxon>
        <taxon>Thermoproteota</taxon>
        <taxon>Thermoprotei</taxon>
        <taxon>Thermoproteales</taxon>
        <taxon>Thermoproteaceae</taxon>
        <taxon>Pyrobaculum</taxon>
    </lineage>
</organism>
<sequence>MIPREIKEVLDVVLRHNRWRRWETINLIASENVMSPLAEIFYINDFGGRYAEGTIGSRYYQGTKYVDVVEEALVKEFAEVLGAKFVDVRPISGTVANLATYFALVPEGGSVASLPIRCGGHISHSNVGGLKALRIKTVELPWDLENFNVDVDAARKVLEDKRPNLVILGGSLYLFPHPIKEVAEIAKGIGAYVLHDSAHVLGLIVGGVFPNPLREGADVITSSTHKTFPGPQGGLIATNLGDDANGQIQKAVFPTFTSNYHLHRYVATYITLVEMKLFGHEYASRVVENAKALAEALAEEGVTPVAERLGFTKTHQVAVDVSKYGGGDKVAALLEEANIIVNKNALPWDRSVVKPSGIRIGVQEMTRFGMGKDEMREIAKFIARVLRGEDPASVRRDVVDFRRGFVEVKYGFKASREVIEEVFASLNLLA</sequence>